<proteinExistence type="inferred from homology"/>
<reference key="1">
    <citation type="journal article" date="2007" name="J. Bacteriol.">
        <title>Complete genome sequence of Haemophilus somnus (Histophilus somni) strain 129Pt and comparison to Haemophilus ducreyi 35000HP and Haemophilus influenzae Rd.</title>
        <authorList>
            <person name="Challacombe J.F."/>
            <person name="Duncan A.J."/>
            <person name="Brettin T.S."/>
            <person name="Bruce D."/>
            <person name="Chertkov O."/>
            <person name="Detter J.C."/>
            <person name="Han C.S."/>
            <person name="Misra M."/>
            <person name="Richardson P."/>
            <person name="Tapia R."/>
            <person name="Thayer N."/>
            <person name="Xie G."/>
            <person name="Inzana T.J."/>
        </authorList>
    </citation>
    <scope>NUCLEOTIDE SEQUENCE [LARGE SCALE GENOMIC DNA]</scope>
    <source>
        <strain>129Pt</strain>
    </source>
</reference>
<sequence>MLCAIYKTKRKEGMYLYIEKRGHFDSVPSSLLESFGKPIFVMLFNLAGQKSLINANNEDVQQQIKQNGFYLQMPKQQENLLEQERQYLKHNK</sequence>
<organism>
    <name type="scientific">Histophilus somni (strain 129Pt)</name>
    <name type="common">Haemophilus somnus</name>
    <dbReference type="NCBI Taxonomy" id="205914"/>
    <lineage>
        <taxon>Bacteria</taxon>
        <taxon>Pseudomonadati</taxon>
        <taxon>Pseudomonadota</taxon>
        <taxon>Gammaproteobacteria</taxon>
        <taxon>Pasteurellales</taxon>
        <taxon>Pasteurellaceae</taxon>
        <taxon>Histophilus</taxon>
    </lineage>
</organism>
<gene>
    <name type="ordered locus">HS_0805</name>
</gene>
<evidence type="ECO:0000255" key="1">
    <source>
        <dbReference type="HAMAP-Rule" id="MF_01866"/>
    </source>
</evidence>
<dbReference type="EMBL" id="CP000436">
    <property type="protein sequence ID" value="ABI25080.1"/>
    <property type="molecule type" value="Genomic_DNA"/>
</dbReference>
<dbReference type="SMR" id="Q0I3R1"/>
<dbReference type="KEGG" id="hso:HS_0805"/>
<dbReference type="eggNOG" id="COG3100">
    <property type="taxonomic scope" value="Bacteria"/>
</dbReference>
<dbReference type="HOGENOM" id="CLU_155118_1_0_6"/>
<dbReference type="Gene3D" id="3.10.510.20">
    <property type="entry name" value="YcgL domain"/>
    <property type="match status" value="1"/>
</dbReference>
<dbReference type="HAMAP" id="MF_01866">
    <property type="entry name" value="UPF0745"/>
    <property type="match status" value="1"/>
</dbReference>
<dbReference type="InterPro" id="IPR038068">
    <property type="entry name" value="YcgL-like_sf"/>
</dbReference>
<dbReference type="InterPro" id="IPR027354">
    <property type="entry name" value="YcgL_dom"/>
</dbReference>
<dbReference type="PANTHER" id="PTHR38109">
    <property type="entry name" value="PROTEIN YCGL"/>
    <property type="match status" value="1"/>
</dbReference>
<dbReference type="PANTHER" id="PTHR38109:SF1">
    <property type="entry name" value="PROTEIN YCGL"/>
    <property type="match status" value="1"/>
</dbReference>
<dbReference type="Pfam" id="PF05166">
    <property type="entry name" value="YcgL"/>
    <property type="match status" value="1"/>
</dbReference>
<dbReference type="SUPFAM" id="SSF160191">
    <property type="entry name" value="YcgL-like"/>
    <property type="match status" value="1"/>
</dbReference>
<dbReference type="PROSITE" id="PS51648">
    <property type="entry name" value="YCGL"/>
    <property type="match status" value="1"/>
</dbReference>
<name>Y805_HISS1</name>
<feature type="chain" id="PRO_0000375312" description="YcgL domain-containing protein HS_0805">
    <location>
        <begin position="1"/>
        <end position="92"/>
    </location>
</feature>
<feature type="domain" description="YcgL" evidence="1">
    <location>
        <begin position="1"/>
        <end position="85"/>
    </location>
</feature>
<protein>
    <recommendedName>
        <fullName evidence="1">YcgL domain-containing protein HS_0805</fullName>
    </recommendedName>
</protein>
<accession>Q0I3R1</accession>